<gene>
    <name evidence="1" type="primary">xylA</name>
    <name type="ordered locus">YPDSF_3780</name>
</gene>
<protein>
    <recommendedName>
        <fullName evidence="1">Xylose isomerase</fullName>
        <ecNumber evidence="1">5.3.1.5</ecNumber>
    </recommendedName>
</protein>
<evidence type="ECO:0000255" key="1">
    <source>
        <dbReference type="HAMAP-Rule" id="MF_00455"/>
    </source>
</evidence>
<proteinExistence type="inferred from homology"/>
<reference key="1">
    <citation type="submission" date="2007-02" db="EMBL/GenBank/DDBJ databases">
        <title>Complete sequence of chromosome of Yersinia pestis Pestoides F.</title>
        <authorList>
            <consortium name="US DOE Joint Genome Institute"/>
            <person name="Copeland A."/>
            <person name="Lucas S."/>
            <person name="Lapidus A."/>
            <person name="Barry K."/>
            <person name="Detter J.C."/>
            <person name="Glavina del Rio T."/>
            <person name="Hammon N."/>
            <person name="Israni S."/>
            <person name="Dalin E."/>
            <person name="Tice H."/>
            <person name="Pitluck S."/>
            <person name="Di Bartolo G."/>
            <person name="Chain P."/>
            <person name="Malfatti S."/>
            <person name="Shin M."/>
            <person name="Vergez L."/>
            <person name="Schmutz J."/>
            <person name="Larimer F."/>
            <person name="Land M."/>
            <person name="Hauser L."/>
            <person name="Worsham P."/>
            <person name="Chu M."/>
            <person name="Bearden S."/>
            <person name="Garcia E."/>
            <person name="Richardson P."/>
        </authorList>
    </citation>
    <scope>NUCLEOTIDE SEQUENCE [LARGE SCALE GENOMIC DNA]</scope>
    <source>
        <strain>Pestoides F</strain>
    </source>
</reference>
<comment type="catalytic activity">
    <reaction evidence="1">
        <text>alpha-D-xylose = alpha-D-xylulofuranose</text>
        <dbReference type="Rhea" id="RHEA:22816"/>
        <dbReference type="ChEBI" id="CHEBI:28518"/>
        <dbReference type="ChEBI" id="CHEBI:188998"/>
        <dbReference type="EC" id="5.3.1.5"/>
    </reaction>
</comment>
<comment type="cofactor">
    <cofactor evidence="1">
        <name>Mg(2+)</name>
        <dbReference type="ChEBI" id="CHEBI:18420"/>
    </cofactor>
    <text evidence="1">Binds 2 magnesium ions per subunit.</text>
</comment>
<comment type="subunit">
    <text evidence="1">Homotetramer.</text>
</comment>
<comment type="subcellular location">
    <subcellularLocation>
        <location evidence="1">Cytoplasm</location>
    </subcellularLocation>
</comment>
<comment type="similarity">
    <text evidence="1">Belongs to the xylose isomerase family.</text>
</comment>
<keyword id="KW-0119">Carbohydrate metabolism</keyword>
<keyword id="KW-0963">Cytoplasm</keyword>
<keyword id="KW-0413">Isomerase</keyword>
<keyword id="KW-0460">Magnesium</keyword>
<keyword id="KW-0479">Metal-binding</keyword>
<keyword id="KW-0859">Xylose metabolism</keyword>
<feature type="chain" id="PRO_1000026462" description="Xylose isomerase">
    <location>
        <begin position="1"/>
        <end position="439"/>
    </location>
</feature>
<feature type="active site" evidence="1">
    <location>
        <position position="101"/>
    </location>
</feature>
<feature type="active site" evidence="1">
    <location>
        <position position="104"/>
    </location>
</feature>
<feature type="binding site" evidence="1">
    <location>
        <position position="232"/>
    </location>
    <ligand>
        <name>Mg(2+)</name>
        <dbReference type="ChEBI" id="CHEBI:18420"/>
        <label>1</label>
    </ligand>
</feature>
<feature type="binding site" evidence="1">
    <location>
        <position position="268"/>
    </location>
    <ligand>
        <name>Mg(2+)</name>
        <dbReference type="ChEBI" id="CHEBI:18420"/>
        <label>1</label>
    </ligand>
</feature>
<feature type="binding site" evidence="1">
    <location>
        <position position="268"/>
    </location>
    <ligand>
        <name>Mg(2+)</name>
        <dbReference type="ChEBI" id="CHEBI:18420"/>
        <label>2</label>
    </ligand>
</feature>
<feature type="binding site" evidence="1">
    <location>
        <position position="271"/>
    </location>
    <ligand>
        <name>Mg(2+)</name>
        <dbReference type="ChEBI" id="CHEBI:18420"/>
        <label>2</label>
    </ligand>
</feature>
<feature type="binding site" evidence="1">
    <location>
        <position position="296"/>
    </location>
    <ligand>
        <name>Mg(2+)</name>
        <dbReference type="ChEBI" id="CHEBI:18420"/>
        <label>1</label>
    </ligand>
</feature>
<feature type="binding site" evidence="1">
    <location>
        <position position="307"/>
    </location>
    <ligand>
        <name>Mg(2+)</name>
        <dbReference type="ChEBI" id="CHEBI:18420"/>
        <label>2</label>
    </ligand>
</feature>
<feature type="binding site" evidence="1">
    <location>
        <position position="309"/>
    </location>
    <ligand>
        <name>Mg(2+)</name>
        <dbReference type="ChEBI" id="CHEBI:18420"/>
        <label>2</label>
    </ligand>
</feature>
<feature type="binding site" evidence="1">
    <location>
        <position position="339"/>
    </location>
    <ligand>
        <name>Mg(2+)</name>
        <dbReference type="ChEBI" id="CHEBI:18420"/>
        <label>1</label>
    </ligand>
</feature>
<organism>
    <name type="scientific">Yersinia pestis (strain Pestoides F)</name>
    <dbReference type="NCBI Taxonomy" id="386656"/>
    <lineage>
        <taxon>Bacteria</taxon>
        <taxon>Pseudomonadati</taxon>
        <taxon>Pseudomonadota</taxon>
        <taxon>Gammaproteobacteria</taxon>
        <taxon>Enterobacterales</taxon>
        <taxon>Yersiniaceae</taxon>
        <taxon>Yersinia</taxon>
    </lineage>
</organism>
<name>XYLA_YERPP</name>
<dbReference type="EC" id="5.3.1.5" evidence="1"/>
<dbReference type="EMBL" id="CP000668">
    <property type="protein sequence ID" value="ABP42125.1"/>
    <property type="molecule type" value="Genomic_DNA"/>
</dbReference>
<dbReference type="RefSeq" id="WP_002209593.1">
    <property type="nucleotide sequence ID" value="NZ_CP009715.1"/>
</dbReference>
<dbReference type="SMR" id="A4TS63"/>
<dbReference type="GeneID" id="57974675"/>
<dbReference type="KEGG" id="ypp:YPDSF_3780"/>
<dbReference type="PATRIC" id="fig|386656.14.peg.742"/>
<dbReference type="GO" id="GO:0005737">
    <property type="term" value="C:cytoplasm"/>
    <property type="evidence" value="ECO:0007669"/>
    <property type="project" value="UniProtKB-SubCell"/>
</dbReference>
<dbReference type="GO" id="GO:0000287">
    <property type="term" value="F:magnesium ion binding"/>
    <property type="evidence" value="ECO:0007669"/>
    <property type="project" value="UniProtKB-UniRule"/>
</dbReference>
<dbReference type="GO" id="GO:0009045">
    <property type="term" value="F:xylose isomerase activity"/>
    <property type="evidence" value="ECO:0007669"/>
    <property type="project" value="UniProtKB-UniRule"/>
</dbReference>
<dbReference type="GO" id="GO:0042732">
    <property type="term" value="P:D-xylose metabolic process"/>
    <property type="evidence" value="ECO:0007669"/>
    <property type="project" value="UniProtKB-UniRule"/>
</dbReference>
<dbReference type="FunFam" id="3.20.20.150:FF:000002">
    <property type="entry name" value="Xylose isomerase"/>
    <property type="match status" value="1"/>
</dbReference>
<dbReference type="Gene3D" id="3.20.20.150">
    <property type="entry name" value="Divalent-metal-dependent TIM barrel enzymes"/>
    <property type="match status" value="1"/>
</dbReference>
<dbReference type="HAMAP" id="MF_00455">
    <property type="entry name" value="Xylose_isom_A"/>
    <property type="match status" value="1"/>
</dbReference>
<dbReference type="InterPro" id="IPR036237">
    <property type="entry name" value="Xyl_isomerase-like_sf"/>
</dbReference>
<dbReference type="InterPro" id="IPR013452">
    <property type="entry name" value="Xylose_isom_bac"/>
</dbReference>
<dbReference type="InterPro" id="IPR001998">
    <property type="entry name" value="Xylose_isomerase"/>
</dbReference>
<dbReference type="NCBIfam" id="NF003998">
    <property type="entry name" value="PRK05474.1"/>
    <property type="match status" value="1"/>
</dbReference>
<dbReference type="NCBIfam" id="TIGR02630">
    <property type="entry name" value="xylose_isom_A"/>
    <property type="match status" value="1"/>
</dbReference>
<dbReference type="PANTHER" id="PTHR48408">
    <property type="match status" value="1"/>
</dbReference>
<dbReference type="PANTHER" id="PTHR48408:SF1">
    <property type="entry name" value="XYLOSE ISOMERASE"/>
    <property type="match status" value="1"/>
</dbReference>
<dbReference type="PRINTS" id="PR00688">
    <property type="entry name" value="XYLOSISMRASE"/>
</dbReference>
<dbReference type="SUPFAM" id="SSF51658">
    <property type="entry name" value="Xylose isomerase-like"/>
    <property type="match status" value="1"/>
</dbReference>
<dbReference type="PROSITE" id="PS51415">
    <property type="entry name" value="XYLOSE_ISOMERASE"/>
    <property type="match status" value="1"/>
</dbReference>
<accession>A4TS63</accession>
<sequence length="439" mass="49550">MQSYFNELEQVRYEGSQSTNPLAFHHYNPDEMILGKRMADHLRFAACYWHTFCWGGADMFGANAFDRPWQQPGDALALAKRKAEVAFEFFHKLNVPYYCFHDVDVSPEGASLQEYLNNFAVMTDVLAEKQAASGVKLLWGTANCFTHPRYGAGAATNPDPEVFSWAATQVFTAMNATRQLGGENYVLWGGREGYETLLNTDLRQEREQIGRFMQMVVEHKHKTGFQGTLLIEPKPQEPTKHQYDYDVATVYGFLKQFGLEKEIKVNIEANHATLAGHSFHHEIASAIALGIFGSVDANRGDPQLGWDTDQFPNSVEENTLVMFEILKAGGFTTGGLNFDAKVRRQSTDKYDLFYGHIGAMDTMALALKFAAKMIEDGQLDQIVAKRYAGWNSELGQQILQGKMSLEELSRYASQHNLNPQHQSGHQELLENKVNRYLFG</sequence>